<keyword id="KW-0378">Hydrolase</keyword>
<keyword id="KW-0464">Manganese</keyword>
<keyword id="KW-0479">Metal-binding</keyword>
<keyword id="KW-0489">Methyltransferase</keyword>
<keyword id="KW-0533">Nickel</keyword>
<keyword id="KW-1185">Reference proteome</keyword>
<keyword id="KW-0949">S-adenosyl-L-methionine</keyword>
<keyword id="KW-0808">Transferase</keyword>
<accession>Q6AXB1</accession>
<reference key="1">
    <citation type="submission" date="2004-08" db="EMBL/GenBank/DDBJ databases">
        <authorList>
            <consortium name="NIH - Xenopus Gene Collection (XGC) project"/>
        </authorList>
    </citation>
    <scope>NUCLEOTIDE SEQUENCE [LARGE SCALE MRNA]</scope>
    <source>
        <tissue>Ovary</tissue>
    </source>
</reference>
<evidence type="ECO:0000250" key="1">
    <source>
        <dbReference type="UniProtKB" id="Q04371"/>
    </source>
</evidence>
<evidence type="ECO:0000250" key="2">
    <source>
        <dbReference type="UniProtKB" id="Q9H993"/>
    </source>
</evidence>
<evidence type="ECO:0000305" key="3"/>
<proteinExistence type="evidence at transcript level"/>
<protein>
    <recommendedName>
        <fullName evidence="1">Damage-control phosphatase ARMT1</fullName>
        <ecNumber evidence="1">3.1.3.-</ecNumber>
    </recommendedName>
    <alternativeName>
        <fullName evidence="2">Acidic residue methyltransferase 1</fullName>
    </alternativeName>
    <alternativeName>
        <fullName evidence="2">Protein-glutamate O-methyltransferase</fullName>
        <ecNumber evidence="2">2.1.1.-</ecNumber>
    </alternativeName>
    <alternativeName>
        <fullName evidence="1">Sugar phosphate phosphatase ARMT1</fullName>
    </alternativeName>
</protein>
<name>ARMT1_XENLA</name>
<sequence length="440" mass="50680">MDPPCSLSASFEGSFAYLTVRDRLPQILTKVIDTVHRNKHKFFEDHGEEGVEAEKRALSFFSKLRNEMQTNKPVLPLTDNQLDTELWNQYLDYQKSLLNEGETPSWFKSPWLYVECYMYRRIQEGIVLSPPISKYDVFREGKIESFFQSQPAIIALCTYLQELKKNMAALSENQKQEELYKLLQVCLWGNKCDLSISGGLDNSQKFSILSSLESFRPFILVNDMESVLSVLLESKNPESGKELMKRVDIVLDNAGFELITDFVLADALLSFRLASEVHFHGKCMPWFVSDTTKHDFNWTIKQLQAANHKWMSKCGGNWKENLKKSHWIYHEHPFWTLPHEFCMMAQTAPDLYSELQKSDLVIFKGDLNYRKLTGDRKWDFTVPFSEALTTFHPAPLCSIRTLKADVQVGLKAGIGEQLFSTEPDWMISGKYGVVQLSTSV</sequence>
<feature type="chain" id="PRO_0000358926" description="Damage-control phosphatase ARMT1">
    <location>
        <begin position="1"/>
        <end position="440"/>
    </location>
</feature>
<feature type="short sequence motif" description="Subfamily III RTxK motif" evidence="1">
    <location>
        <begin position="400"/>
        <end position="403"/>
    </location>
</feature>
<feature type="binding site" evidence="1">
    <location>
        <begin position="252"/>
        <end position="253"/>
    </location>
    <ligand>
        <name>substrate</name>
    </ligand>
</feature>
<feature type="binding site" evidence="1">
    <location>
        <position position="252"/>
    </location>
    <ligand>
        <name>Mn(2+)</name>
        <dbReference type="ChEBI" id="CHEBI:29035"/>
        <note>catalytic</note>
    </ligand>
</feature>
<feature type="binding site" evidence="1">
    <location>
        <position position="253"/>
    </location>
    <ligand>
        <name>Mn(2+)</name>
        <dbReference type="ChEBI" id="CHEBI:29035"/>
        <note>catalytic</note>
    </ligand>
</feature>
<feature type="binding site" evidence="2">
    <location>
        <position position="257"/>
    </location>
    <ligand>
        <name>S-adenosyl-L-methionine</name>
        <dbReference type="ChEBI" id="CHEBI:59789"/>
    </ligand>
</feature>
<feature type="binding site" evidence="1">
    <location>
        <position position="290"/>
    </location>
    <ligand>
        <name>Mn(2+)</name>
        <dbReference type="ChEBI" id="CHEBI:29035"/>
        <note>catalytic</note>
    </ligand>
</feature>
<feature type="binding site" evidence="2">
    <location>
        <position position="290"/>
    </location>
    <ligand>
        <name>S-adenosyl-L-methionine</name>
        <dbReference type="ChEBI" id="CHEBI:59789"/>
    </ligand>
</feature>
<feature type="binding site" evidence="1">
    <location>
        <begin position="366"/>
        <end position="370"/>
    </location>
    <ligand>
        <name>substrate</name>
    </ligand>
</feature>
<feature type="binding site" evidence="1">
    <location>
        <position position="403"/>
    </location>
    <ligand>
        <name>substrate</name>
    </ligand>
</feature>
<dbReference type="EC" id="3.1.3.-" evidence="1"/>
<dbReference type="EC" id="2.1.1.-" evidence="2"/>
<dbReference type="EMBL" id="BC079682">
    <property type="protein sequence ID" value="AAH79682.1"/>
    <property type="molecule type" value="mRNA"/>
</dbReference>
<dbReference type="RefSeq" id="NP_001087371.1">
    <property type="nucleotide sequence ID" value="NM_001093902.1"/>
</dbReference>
<dbReference type="SMR" id="Q6AXB1"/>
<dbReference type="DNASU" id="447195"/>
<dbReference type="GeneID" id="447195"/>
<dbReference type="KEGG" id="xla:447195"/>
<dbReference type="AGR" id="Xenbase:XB-GENE-6254320"/>
<dbReference type="CTD" id="447195"/>
<dbReference type="Xenbase" id="XB-GENE-6254320">
    <property type="gene designation" value="armt1.L"/>
</dbReference>
<dbReference type="OMA" id="IFARQKM"/>
<dbReference type="OrthoDB" id="541375at2759"/>
<dbReference type="Proteomes" id="UP000186698">
    <property type="component" value="Chromosome 3L"/>
</dbReference>
<dbReference type="Bgee" id="447195">
    <property type="expression patterns" value="Expressed in zone of skin and 19 other cell types or tissues"/>
</dbReference>
<dbReference type="GO" id="GO:0005634">
    <property type="term" value="C:nucleus"/>
    <property type="evidence" value="ECO:0007669"/>
    <property type="project" value="TreeGrafter"/>
</dbReference>
<dbReference type="GO" id="GO:0097023">
    <property type="term" value="F:fructose 6-phosphate aldolase activity"/>
    <property type="evidence" value="ECO:0007669"/>
    <property type="project" value="RHEA"/>
</dbReference>
<dbReference type="GO" id="GO:0103026">
    <property type="term" value="F:fructose-1-phosphatase activity"/>
    <property type="evidence" value="ECO:0007669"/>
    <property type="project" value="RHEA"/>
</dbReference>
<dbReference type="GO" id="GO:0046872">
    <property type="term" value="F:metal ion binding"/>
    <property type="evidence" value="ECO:0007669"/>
    <property type="project" value="UniProtKB-KW"/>
</dbReference>
<dbReference type="GO" id="GO:0016791">
    <property type="term" value="F:phosphatase activity"/>
    <property type="evidence" value="ECO:0000318"/>
    <property type="project" value="GO_Central"/>
</dbReference>
<dbReference type="GO" id="GO:0051998">
    <property type="term" value="F:protein carboxyl O-methyltransferase activity"/>
    <property type="evidence" value="ECO:0000250"/>
    <property type="project" value="UniProtKB"/>
</dbReference>
<dbReference type="GO" id="GO:0008983">
    <property type="term" value="F:protein-glutamate O-methyltransferase activity"/>
    <property type="evidence" value="ECO:0007669"/>
    <property type="project" value="RHEA"/>
</dbReference>
<dbReference type="GO" id="GO:0008757">
    <property type="term" value="F:S-adenosylmethionine-dependent methyltransferase activity"/>
    <property type="evidence" value="ECO:0000250"/>
    <property type="project" value="UniProtKB"/>
</dbReference>
<dbReference type="GO" id="GO:0006974">
    <property type="term" value="P:DNA damage response"/>
    <property type="evidence" value="ECO:0000250"/>
    <property type="project" value="UniProtKB"/>
</dbReference>
<dbReference type="GO" id="GO:0032259">
    <property type="term" value="P:methylation"/>
    <property type="evidence" value="ECO:0007669"/>
    <property type="project" value="UniProtKB-KW"/>
</dbReference>
<dbReference type="FunFam" id="3.40.50.10880:FF:000002">
    <property type="entry name" value="Acidic residue methyltransferase 1"/>
    <property type="match status" value="1"/>
</dbReference>
<dbReference type="FunFam" id="1.20.930.60:FF:000001">
    <property type="entry name" value="protein-glutamate O-methyltransferase isoform X1"/>
    <property type="match status" value="1"/>
</dbReference>
<dbReference type="Gene3D" id="1.20.930.60">
    <property type="match status" value="1"/>
</dbReference>
<dbReference type="Gene3D" id="3.40.50.10880">
    <property type="entry name" value="Uncharacterised protein PF01937, DUF89, domain 3"/>
    <property type="match status" value="1"/>
</dbReference>
<dbReference type="InterPro" id="IPR036075">
    <property type="entry name" value="ARMT-1-like_metal-bd_sf"/>
</dbReference>
<dbReference type="InterPro" id="IPR039763">
    <property type="entry name" value="ARMT1"/>
</dbReference>
<dbReference type="InterPro" id="IPR002791">
    <property type="entry name" value="ARMT1-like_metal-bd"/>
</dbReference>
<dbReference type="PANTHER" id="PTHR12260">
    <property type="entry name" value="DAMAGE-CONTROL PHOSPHATASE ARMT1"/>
    <property type="match status" value="1"/>
</dbReference>
<dbReference type="PANTHER" id="PTHR12260:SF6">
    <property type="entry name" value="DAMAGE-CONTROL PHOSPHATASE ARMT1"/>
    <property type="match status" value="1"/>
</dbReference>
<dbReference type="Pfam" id="PF01937">
    <property type="entry name" value="ARMT1-like_dom"/>
    <property type="match status" value="1"/>
</dbReference>
<dbReference type="SUPFAM" id="SSF111321">
    <property type="entry name" value="AF1104-like"/>
    <property type="match status" value="1"/>
</dbReference>
<organism>
    <name type="scientific">Xenopus laevis</name>
    <name type="common">African clawed frog</name>
    <dbReference type="NCBI Taxonomy" id="8355"/>
    <lineage>
        <taxon>Eukaryota</taxon>
        <taxon>Metazoa</taxon>
        <taxon>Chordata</taxon>
        <taxon>Craniata</taxon>
        <taxon>Vertebrata</taxon>
        <taxon>Euteleostomi</taxon>
        <taxon>Amphibia</taxon>
        <taxon>Batrachia</taxon>
        <taxon>Anura</taxon>
        <taxon>Pipoidea</taxon>
        <taxon>Pipidae</taxon>
        <taxon>Xenopodinae</taxon>
        <taxon>Xenopus</taxon>
        <taxon>Xenopus</taxon>
    </lineage>
</organism>
<comment type="function">
    <text evidence="1 2">Metal-dependent phosphatase that shows phosphatase activity against several substrates, including fructose-1-phosphate and fructose-6-phosphate (By similarity). Its preference for fructose-1-phosphate, a strong glycating agent that causes DNA damage rather than a canonical yeast metabolite, suggests a damage-control function in hexose phosphate metabolism (By similarity). Has also been shown to have O-methyltransferase activity that methylates glutamate residues of target proteins to form gamma-glutamyl methyl ester residues (By similarity). Possibly methylates PCNA, suggesting it is involved in the DNA damage response (By similarity).</text>
</comment>
<comment type="catalytic activity">
    <reaction evidence="1">
        <text>beta-D-fructose 1-phosphate + H2O = D-fructose + phosphate</text>
        <dbReference type="Rhea" id="RHEA:35603"/>
        <dbReference type="ChEBI" id="CHEBI:15377"/>
        <dbReference type="ChEBI" id="CHEBI:37721"/>
        <dbReference type="ChEBI" id="CHEBI:43474"/>
        <dbReference type="ChEBI" id="CHEBI:138881"/>
    </reaction>
</comment>
<comment type="catalytic activity">
    <reaction evidence="1">
        <text>beta-D-fructose 6-phosphate = dihydroxyacetone + D-glyceraldehyde 3-phosphate</text>
        <dbReference type="Rhea" id="RHEA:28002"/>
        <dbReference type="ChEBI" id="CHEBI:16016"/>
        <dbReference type="ChEBI" id="CHEBI:57634"/>
        <dbReference type="ChEBI" id="CHEBI:59776"/>
    </reaction>
</comment>
<comment type="catalytic activity">
    <reaction evidence="2">
        <text>L-glutamyl-[protein] + S-adenosyl-L-methionine = [protein]-L-glutamate 5-O-methyl ester + S-adenosyl-L-homocysteine</text>
        <dbReference type="Rhea" id="RHEA:24452"/>
        <dbReference type="Rhea" id="RHEA-COMP:10208"/>
        <dbReference type="Rhea" id="RHEA-COMP:10311"/>
        <dbReference type="ChEBI" id="CHEBI:29973"/>
        <dbReference type="ChEBI" id="CHEBI:57856"/>
        <dbReference type="ChEBI" id="CHEBI:59789"/>
        <dbReference type="ChEBI" id="CHEBI:82795"/>
    </reaction>
</comment>
<comment type="cofactor">
    <cofactor evidence="1">
        <name>Mn(2+)</name>
        <dbReference type="ChEBI" id="CHEBI:29035"/>
    </cofactor>
    <cofactor evidence="1">
        <name>Ni(2+)</name>
        <dbReference type="ChEBI" id="CHEBI:49786"/>
    </cofactor>
</comment>
<comment type="domain">
    <text evidence="1">Subfamily III proteins have a conserved RTxK motif about 40-50 residues from the C-terminus; the threonine may be replaced by serine or cysteine.</text>
</comment>
<comment type="PTM">
    <text evidence="2">Automethylated.</text>
</comment>
<comment type="similarity">
    <text evidence="3">Belongs to the damage-control phosphatase family. Sugar phosphate phosphatase III subfamily.</text>
</comment>
<comment type="caution">
    <text evidence="2">Human C6orf211 has been reportedly associated with a protein carboxyl methyltransferase activity, but whether this protein indeed has such an activity remains to be determined (By similarity). It has been later shown to belong to a family of metal-dependent phosphatases implicated in metabolite damage-control (By similarity).</text>
</comment>
<gene>
    <name evidence="2" type="primary">armt1</name>
</gene>